<dbReference type="EMBL" id="Y00558">
    <property type="protein sequence ID" value="CAA68640.1"/>
    <property type="molecule type" value="Genomic_DNA"/>
</dbReference>
<dbReference type="PIR" id="S02828">
    <property type="entry name" value="S02828"/>
</dbReference>
<dbReference type="SMR" id="P10488"/>
<dbReference type="GO" id="GO:0042597">
    <property type="term" value="C:periplasmic space"/>
    <property type="evidence" value="ECO:0007669"/>
    <property type="project" value="UniProtKB-SubCell"/>
</dbReference>
<dbReference type="GO" id="GO:0046677">
    <property type="term" value="P:response to antibiotic"/>
    <property type="evidence" value="ECO:0007669"/>
    <property type="project" value="UniProtKB-KW"/>
</dbReference>
<organism>
    <name type="scientific">Klebsiella oxytoca</name>
    <dbReference type="NCBI Taxonomy" id="571"/>
    <lineage>
        <taxon>Bacteria</taxon>
        <taxon>Pseudomonadati</taxon>
        <taxon>Pseudomonadota</taxon>
        <taxon>Gammaproteobacteria</taxon>
        <taxon>Enterobacterales</taxon>
        <taxon>Enterobacteriaceae</taxon>
        <taxon>Klebsiella/Raoultella group</taxon>
        <taxon>Klebsiella</taxon>
    </lineage>
</organism>
<accession>P10488</accession>
<protein>
    <recommendedName>
        <fullName>Albicidin resistance protein</fullName>
    </recommendedName>
</protein>
<sequence>MYDRWFSQQELQVLPFADEDEQRNQTWLELVGEAQQLMANAARQMSRGRLRWQPAGWSSWSRIHRHAEFLTRLNEMHAAEPQMREQTGVTPEMIDFITRAFAESKLAIWARYLNAEELAFTRQHYFDRLMEWPALVADLHRACREKRDRPPRKVSSWRSAAWRCSSLTRVKMRRRSRISLCHAQVPALMKGTWMTSEVLSWLQQAIGVMMRQAQGPRE</sequence>
<reference key="1">
    <citation type="journal article" date="1988" name="Mol. Microbiol.">
        <title>Cloning and characterization of an albicidin resistance gene from Klebsiella oxytoca.</title>
        <authorList>
            <person name="Walker M.J."/>
            <person name="Birch R.G."/>
            <person name="Pemberton J.M."/>
        </authorList>
    </citation>
    <scope>NUCLEOTIDE SEQUENCE [GENOMIC DNA]</scope>
    <source>
        <strain>JMP4505</strain>
    </source>
</reference>
<proteinExistence type="predicted"/>
<comment type="function">
    <text>Albicidin resistance protein binds to form a complex without antibiotic activity but without catalyzing any further chemical modifications to albicidin.</text>
</comment>
<comment type="subcellular location">
    <subcellularLocation>
        <location>Periplasm</location>
    </subcellularLocation>
</comment>
<keyword id="KW-0046">Antibiotic resistance</keyword>
<keyword id="KW-0574">Periplasm</keyword>
<feature type="chain" id="PRO_0000068559" description="Albicidin resistance protein">
    <location>
        <begin position="1"/>
        <end position="218"/>
    </location>
</feature>
<name>ALBR_KLEOX</name>